<reference key="1">
    <citation type="submission" date="1996-05" db="EMBL/GenBank/DDBJ databases">
        <authorList>
            <person name="Chen T."/>
            <person name="Leschine S.B."/>
        </authorList>
    </citation>
    <scope>NUCLEOTIDE SEQUENCE [GENOMIC DNA]</scope>
    <source>
        <strain>B3B</strain>
    </source>
</reference>
<accession>Q46083</accession>
<protein>
    <recommendedName>
        <fullName>Nitrogenase iron-iron protein delta chain</fullName>
        <ecNumber>1.18.6.1</ecNumber>
    </recommendedName>
    <alternativeName>
        <fullName>Dinitrogenase 3 subunit delta</fullName>
    </alternativeName>
    <alternativeName>
        <fullName>Nitrogenase 3 subunit G</fullName>
    </alternativeName>
    <alternativeName>
        <fullName>Nitrogenase component I</fullName>
    </alternativeName>
</protein>
<gene>
    <name type="primary">anfG</name>
</gene>
<name>ANFG_RUMHU</name>
<sequence>MSTAFAAAVVKQKVEAPISPMDARIDELTDYIMKTLLWQFHSRSWDRERQNAEILKKTKELLCGEPVDLSTSHDRCYWVDAVCLADDYREHYPWINSMSKEEIGSLMQGLKDRMDYLTIHRLLNEELSDKHY</sequence>
<comment type="function">
    <text>The key enzymatic reactions in nitrogen fixation are catalyzed by the nitrogenase complex, which has 2 components: the iron protein (component 2) and a component 1 which is either a molybdenum-iron protein, a vanadium-iron, or an iron-iron protein.</text>
</comment>
<comment type="catalytic activity">
    <reaction>
        <text>N2 + 8 reduced [2Fe-2S]-[ferredoxin] + 16 ATP + 16 H2O = H2 + 8 oxidized [2Fe-2S]-[ferredoxin] + 2 NH4(+) + 16 ADP + 16 phosphate + 6 H(+)</text>
        <dbReference type="Rhea" id="RHEA:21448"/>
        <dbReference type="Rhea" id="RHEA-COMP:10000"/>
        <dbReference type="Rhea" id="RHEA-COMP:10001"/>
        <dbReference type="ChEBI" id="CHEBI:15377"/>
        <dbReference type="ChEBI" id="CHEBI:15378"/>
        <dbReference type="ChEBI" id="CHEBI:17997"/>
        <dbReference type="ChEBI" id="CHEBI:18276"/>
        <dbReference type="ChEBI" id="CHEBI:28938"/>
        <dbReference type="ChEBI" id="CHEBI:30616"/>
        <dbReference type="ChEBI" id="CHEBI:33737"/>
        <dbReference type="ChEBI" id="CHEBI:33738"/>
        <dbReference type="ChEBI" id="CHEBI:43474"/>
        <dbReference type="ChEBI" id="CHEBI:456216"/>
        <dbReference type="EC" id="1.18.6.1"/>
    </reaction>
</comment>
<comment type="cofactor">
    <cofactor evidence="1">
        <name>iron-sulfur cluster</name>
        <dbReference type="ChEBI" id="CHEBI:30408"/>
    </cofactor>
</comment>
<comment type="subunit">
    <text evidence="1">Hexamer of two alpha, two beta, and two delta chains.</text>
</comment>
<comment type="sequence caution" evidence="2">
    <conflict type="frameshift">
        <sequence resource="EMBL-CDS" id="AAB02936"/>
    </conflict>
</comment>
<dbReference type="EC" id="1.18.6.1"/>
<dbReference type="EMBL" id="U59415">
    <property type="protein sequence ID" value="AAB02936.1"/>
    <property type="status" value="ALT_FRAME"/>
    <property type="molecule type" value="Genomic_DNA"/>
</dbReference>
<dbReference type="SMR" id="Q46083"/>
<dbReference type="GO" id="GO:0005524">
    <property type="term" value="F:ATP binding"/>
    <property type="evidence" value="ECO:0007669"/>
    <property type="project" value="UniProtKB-KW"/>
</dbReference>
<dbReference type="GO" id="GO:0005506">
    <property type="term" value="F:iron ion binding"/>
    <property type="evidence" value="ECO:0007669"/>
    <property type="project" value="InterPro"/>
</dbReference>
<dbReference type="GO" id="GO:0051536">
    <property type="term" value="F:iron-sulfur cluster binding"/>
    <property type="evidence" value="ECO:0007669"/>
    <property type="project" value="UniProtKB-KW"/>
</dbReference>
<dbReference type="GO" id="GO:0016163">
    <property type="term" value="F:nitrogenase activity"/>
    <property type="evidence" value="ECO:0007669"/>
    <property type="project" value="UniProtKB-EC"/>
</dbReference>
<dbReference type="GO" id="GO:0009399">
    <property type="term" value="P:nitrogen fixation"/>
    <property type="evidence" value="ECO:0007669"/>
    <property type="project" value="UniProtKB-KW"/>
</dbReference>
<dbReference type="InterPro" id="IPR014278">
    <property type="entry name" value="Nase_Fe-Fe_dsu"/>
</dbReference>
<dbReference type="InterPro" id="IPR004349">
    <property type="entry name" value="V/Nase_d_su"/>
</dbReference>
<dbReference type="NCBIfam" id="TIGR02929">
    <property type="entry name" value="anfG_nitrog"/>
    <property type="match status" value="1"/>
</dbReference>
<dbReference type="Pfam" id="PF03139">
    <property type="entry name" value="AnfG_VnfG"/>
    <property type="match status" value="1"/>
</dbReference>
<keyword id="KW-0067">ATP-binding</keyword>
<keyword id="KW-0408">Iron</keyword>
<keyword id="KW-0411">Iron-sulfur</keyword>
<keyword id="KW-0479">Metal-binding</keyword>
<keyword id="KW-0535">Nitrogen fixation</keyword>
<keyword id="KW-0547">Nucleotide-binding</keyword>
<keyword id="KW-0560">Oxidoreductase</keyword>
<organism>
    <name type="scientific">Ruminiclostridium hungatei</name>
    <name type="common">Clostridium hungatei</name>
    <dbReference type="NCBI Taxonomy" id="48256"/>
    <lineage>
        <taxon>Bacteria</taxon>
        <taxon>Bacillati</taxon>
        <taxon>Bacillota</taxon>
        <taxon>Clostridia</taxon>
        <taxon>Eubacteriales</taxon>
        <taxon>Oscillospiraceae</taxon>
        <taxon>Ruminiclostridium</taxon>
    </lineage>
</organism>
<feature type="chain" id="PRO_0000213565" description="Nitrogenase iron-iron protein delta chain">
    <location>
        <begin position="1"/>
        <end position="132"/>
    </location>
</feature>
<proteinExistence type="inferred from homology"/>
<evidence type="ECO:0000250" key="1"/>
<evidence type="ECO:0000305" key="2"/>